<comment type="function">
    <text evidence="1">Secreted subtilisin-like serine protease with keratinolytic activity that contributes to pathogenicity.</text>
</comment>
<comment type="subcellular location">
    <subcellularLocation>
        <location evidence="1">Secreted</location>
    </subcellularLocation>
</comment>
<comment type="similarity">
    <text evidence="4">Belongs to the peptidase S8 family.</text>
</comment>
<feature type="signal peptide" evidence="2">
    <location>
        <begin position="1"/>
        <end position="19"/>
    </location>
</feature>
<feature type="propeptide" id="PRO_0000407004" evidence="1">
    <location>
        <begin position="20"/>
        <end position="118"/>
    </location>
</feature>
<feature type="chain" id="PRO_0000407005" description="Subtilisin-like protease CPC735_047380">
    <location>
        <begin position="119"/>
        <end position="400"/>
    </location>
</feature>
<feature type="domain" description="Inhibitor I9" evidence="2">
    <location>
        <begin position="35"/>
        <end position="116"/>
    </location>
</feature>
<feature type="domain" description="Peptidase S8" evidence="3">
    <location>
        <begin position="128"/>
        <end position="400"/>
    </location>
</feature>
<feature type="active site" description="Charge relay system" evidence="3">
    <location>
        <position position="160"/>
    </location>
</feature>
<feature type="active site" description="Charge relay system" evidence="3">
    <location>
        <position position="191"/>
    </location>
</feature>
<feature type="active site" description="Charge relay system" evidence="3">
    <location>
        <position position="346"/>
    </location>
</feature>
<feature type="glycosylation site" description="N-linked (GlcNAc...) asparagine" evidence="2">
    <location>
        <position position="153"/>
    </location>
</feature>
<feature type="glycosylation site" description="N-linked (GlcNAc...) asparagine" evidence="2">
    <location>
        <position position="244"/>
    </location>
</feature>
<feature type="glycosylation site" description="N-linked (GlcNAc...) asparagine" evidence="2">
    <location>
        <position position="252"/>
    </location>
</feature>
<feature type="glycosylation site" description="N-linked (GlcNAc...) asparagine" evidence="2">
    <location>
        <position position="396"/>
    </location>
</feature>
<organism>
    <name type="scientific">Coccidioides posadasii (strain C735)</name>
    <name type="common">Valley fever fungus</name>
    <dbReference type="NCBI Taxonomy" id="222929"/>
    <lineage>
        <taxon>Eukaryota</taxon>
        <taxon>Fungi</taxon>
        <taxon>Dikarya</taxon>
        <taxon>Ascomycota</taxon>
        <taxon>Pezizomycotina</taxon>
        <taxon>Eurotiomycetes</taxon>
        <taxon>Eurotiomycetidae</taxon>
        <taxon>Onygenales</taxon>
        <taxon>Onygenaceae</taxon>
        <taxon>Coccidioides</taxon>
    </lineage>
</organism>
<gene>
    <name type="ORF">CPC735_047380</name>
</gene>
<name>SU11B_COCP7</name>
<dbReference type="EC" id="3.4.21.-"/>
<dbReference type="EMBL" id="ACFW01000049">
    <property type="protein sequence ID" value="EER23368.1"/>
    <property type="molecule type" value="Genomic_DNA"/>
</dbReference>
<dbReference type="RefSeq" id="XP_003065513.1">
    <property type="nucleotide sequence ID" value="XM_003065467.1"/>
</dbReference>
<dbReference type="SMR" id="C5PFR5"/>
<dbReference type="KEGG" id="cpw:9690983"/>
<dbReference type="VEuPathDB" id="FungiDB:CPC735_047380"/>
<dbReference type="HOGENOM" id="CLU_011263_1_3_1"/>
<dbReference type="OrthoDB" id="206201at2759"/>
<dbReference type="Proteomes" id="UP000009084">
    <property type="component" value="Unassembled WGS sequence"/>
</dbReference>
<dbReference type="GO" id="GO:0005576">
    <property type="term" value="C:extracellular region"/>
    <property type="evidence" value="ECO:0007669"/>
    <property type="project" value="UniProtKB-SubCell"/>
</dbReference>
<dbReference type="GO" id="GO:0004252">
    <property type="term" value="F:serine-type endopeptidase activity"/>
    <property type="evidence" value="ECO:0007669"/>
    <property type="project" value="InterPro"/>
</dbReference>
<dbReference type="GO" id="GO:0006508">
    <property type="term" value="P:proteolysis"/>
    <property type="evidence" value="ECO:0007669"/>
    <property type="project" value="UniProtKB-KW"/>
</dbReference>
<dbReference type="CDD" id="cd04077">
    <property type="entry name" value="Peptidases_S8_PCSK9_ProteinaseK_like"/>
    <property type="match status" value="1"/>
</dbReference>
<dbReference type="FunFam" id="3.40.50.200:FF:000014">
    <property type="entry name" value="Proteinase K"/>
    <property type="match status" value="1"/>
</dbReference>
<dbReference type="Gene3D" id="3.30.70.80">
    <property type="entry name" value="Peptidase S8 propeptide/proteinase inhibitor I9"/>
    <property type="match status" value="1"/>
</dbReference>
<dbReference type="Gene3D" id="3.40.50.200">
    <property type="entry name" value="Peptidase S8/S53 domain"/>
    <property type="match status" value="1"/>
</dbReference>
<dbReference type="InterPro" id="IPR034193">
    <property type="entry name" value="PCSK9_ProteinaseK-like"/>
</dbReference>
<dbReference type="InterPro" id="IPR000209">
    <property type="entry name" value="Peptidase_S8/S53_dom"/>
</dbReference>
<dbReference type="InterPro" id="IPR036852">
    <property type="entry name" value="Peptidase_S8/S53_dom_sf"/>
</dbReference>
<dbReference type="InterPro" id="IPR023828">
    <property type="entry name" value="Peptidase_S8_Ser-AS"/>
</dbReference>
<dbReference type="InterPro" id="IPR050131">
    <property type="entry name" value="Peptidase_S8_subtilisin-like"/>
</dbReference>
<dbReference type="InterPro" id="IPR015500">
    <property type="entry name" value="Peptidase_S8_subtilisin-rel"/>
</dbReference>
<dbReference type="InterPro" id="IPR010259">
    <property type="entry name" value="S8pro/Inhibitor_I9"/>
</dbReference>
<dbReference type="InterPro" id="IPR037045">
    <property type="entry name" value="S8pro/Inhibitor_I9_sf"/>
</dbReference>
<dbReference type="PANTHER" id="PTHR43806:SF11">
    <property type="entry name" value="CEREVISIN-RELATED"/>
    <property type="match status" value="1"/>
</dbReference>
<dbReference type="PANTHER" id="PTHR43806">
    <property type="entry name" value="PEPTIDASE S8"/>
    <property type="match status" value="1"/>
</dbReference>
<dbReference type="Pfam" id="PF05922">
    <property type="entry name" value="Inhibitor_I9"/>
    <property type="match status" value="1"/>
</dbReference>
<dbReference type="Pfam" id="PF00082">
    <property type="entry name" value="Peptidase_S8"/>
    <property type="match status" value="1"/>
</dbReference>
<dbReference type="PRINTS" id="PR00723">
    <property type="entry name" value="SUBTILISIN"/>
</dbReference>
<dbReference type="SUPFAM" id="SSF54897">
    <property type="entry name" value="Protease propeptides/inhibitors"/>
    <property type="match status" value="1"/>
</dbReference>
<dbReference type="SUPFAM" id="SSF52743">
    <property type="entry name" value="Subtilisin-like"/>
    <property type="match status" value="1"/>
</dbReference>
<dbReference type="PROSITE" id="PS51892">
    <property type="entry name" value="SUBTILASE"/>
    <property type="match status" value="1"/>
</dbReference>
<dbReference type="PROSITE" id="PS00138">
    <property type="entry name" value="SUBTILASE_SER"/>
    <property type="match status" value="1"/>
</dbReference>
<sequence length="400" mass="42313">MARINVVVSFLAALAVVQAAQLLNLDGQKDAVPGSYVVVMNDGLSGLDFESHVKSMAKVQKANALKRDFDNTADGVKFKYNINGWQAYSGKFDNKTIQSILDDPRVNYIEPQRTFRAFGWVTQDNAPSWGLGRISHTSRGRMDYVYDSSAGENVTVYSVDSGVDISHPEFEGRAIWGVNAADNSDVDQIGHGTHTSGTIAGKTYGVAKMAKIVAVKVLDAGGQGTNGGIIQGINWAVNHARQNNVTGKAVMNMSFGGGLSRAINEAASSAVRAGIFMVAAAGNNNEDARYTTPASARGVCAVGASTQNDLKARFSNWGPTLAVYAPGDRIWSAMPDGGRDVMRGTSMAAPHVAGVAAVLISSEKIGTDRLCERIKELSVSSIQSPGADTTDKLLYNGSGQ</sequence>
<reference key="1">
    <citation type="journal article" date="2009" name="Genome Res.">
        <title>Comparative genomic analyses of the human fungal pathogens Coccidioides and their relatives.</title>
        <authorList>
            <person name="Sharpton T.J."/>
            <person name="Stajich J.E."/>
            <person name="Rounsley S.D."/>
            <person name="Gardner M.J."/>
            <person name="Wortman J.R."/>
            <person name="Jordar V.S."/>
            <person name="Maiti R."/>
            <person name="Kodira C.D."/>
            <person name="Neafsey D.E."/>
            <person name="Zeng Q."/>
            <person name="Hung C.-Y."/>
            <person name="McMahan C."/>
            <person name="Muszewska A."/>
            <person name="Grynberg M."/>
            <person name="Mandel M.A."/>
            <person name="Kellner E.M."/>
            <person name="Barker B.M."/>
            <person name="Galgiani J.N."/>
            <person name="Orbach M.J."/>
            <person name="Kirkland T.N."/>
            <person name="Cole G.T."/>
            <person name="Henn M.R."/>
            <person name="Birren B.W."/>
            <person name="Taylor J.W."/>
        </authorList>
    </citation>
    <scope>NUCLEOTIDE SEQUENCE [LARGE SCALE GENOMIC DNA]</scope>
    <source>
        <strain>C735</strain>
    </source>
</reference>
<protein>
    <recommendedName>
        <fullName>Subtilisin-like protease CPC735_047380</fullName>
        <ecNumber>3.4.21.-</ecNumber>
    </recommendedName>
</protein>
<evidence type="ECO:0000250" key="1"/>
<evidence type="ECO:0000255" key="2"/>
<evidence type="ECO:0000255" key="3">
    <source>
        <dbReference type="PROSITE-ProRule" id="PRU01240"/>
    </source>
</evidence>
<evidence type="ECO:0000305" key="4"/>
<keyword id="KW-0325">Glycoprotein</keyword>
<keyword id="KW-0378">Hydrolase</keyword>
<keyword id="KW-0645">Protease</keyword>
<keyword id="KW-0964">Secreted</keyword>
<keyword id="KW-0720">Serine protease</keyword>
<keyword id="KW-0732">Signal</keyword>
<keyword id="KW-0843">Virulence</keyword>
<keyword id="KW-0865">Zymogen</keyword>
<proteinExistence type="inferred from homology"/>
<accession>C5PFR5</accession>